<sequence length="134" mass="14086">MSAQSLEVGQKARLSKRFGAAEVAAFAALSEDFNPLHLDPAFAATTAFERPIVHGMLLASLFSGLLGQQLPGKGSIYLGQSLSFKLPVFVGDEVTAEVEVTALREDKPIATLTTRIFTQGGALAVTGEAVVKLP</sequence>
<accession>O32472</accession>
<keyword id="KW-0002">3D-structure</keyword>
<keyword id="KW-0903">Direct protein sequencing</keyword>
<keyword id="KW-0276">Fatty acid metabolism</keyword>
<keyword id="KW-0443">Lipid metabolism</keyword>
<keyword id="KW-0456">Lyase</keyword>
<proteinExistence type="evidence at protein level"/>
<name>PHAJ_AERCA</name>
<gene>
    <name type="primary">phaJ</name>
</gene>
<organism>
    <name type="scientific">Aeromonas caviae</name>
    <name type="common">Aeromonas punctata</name>
    <dbReference type="NCBI Taxonomy" id="648"/>
    <lineage>
        <taxon>Bacteria</taxon>
        <taxon>Pseudomonadati</taxon>
        <taxon>Pseudomonadota</taxon>
        <taxon>Gammaproteobacteria</taxon>
        <taxon>Aeromonadales</taxon>
        <taxon>Aeromonadaceae</taxon>
        <taxon>Aeromonas</taxon>
    </lineage>
</organism>
<dbReference type="EC" id="4.2.1.119" evidence="4"/>
<dbReference type="EMBL" id="D88825">
    <property type="protein sequence ID" value="BAA21816.1"/>
    <property type="molecule type" value="Genomic_DNA"/>
</dbReference>
<dbReference type="PDB" id="1IQ6">
    <property type="method" value="X-ray"/>
    <property type="resolution" value="1.50 A"/>
    <property type="chains" value="A/B=1-134"/>
</dbReference>
<dbReference type="PDBsum" id="1IQ6"/>
<dbReference type="SMR" id="O32472"/>
<dbReference type="KEGG" id="ag:BAA21816"/>
<dbReference type="SABIO-RK" id="O32472"/>
<dbReference type="EvolutionaryTrace" id="O32472"/>
<dbReference type="GO" id="GO:0005835">
    <property type="term" value="C:fatty acid synthase complex"/>
    <property type="evidence" value="ECO:0007669"/>
    <property type="project" value="InterPro"/>
</dbReference>
<dbReference type="GO" id="GO:0019171">
    <property type="term" value="F:(3R)-hydroxyacyl-[acyl-carrier-protein] dehydratase activity"/>
    <property type="evidence" value="ECO:0007669"/>
    <property type="project" value="TreeGrafter"/>
</dbReference>
<dbReference type="GO" id="GO:0004312">
    <property type="term" value="F:fatty acid synthase activity"/>
    <property type="evidence" value="ECO:0007669"/>
    <property type="project" value="InterPro"/>
</dbReference>
<dbReference type="GO" id="GO:0006633">
    <property type="term" value="P:fatty acid biosynthetic process"/>
    <property type="evidence" value="ECO:0007669"/>
    <property type="project" value="InterPro"/>
</dbReference>
<dbReference type="CDD" id="cd03449">
    <property type="entry name" value="R_hydratase"/>
    <property type="match status" value="1"/>
</dbReference>
<dbReference type="FunFam" id="3.10.129.10:FF:000042">
    <property type="entry name" value="MaoC domain protein dehydratase"/>
    <property type="match status" value="1"/>
</dbReference>
<dbReference type="Gene3D" id="3.10.129.10">
    <property type="entry name" value="Hotdog Thioesterase"/>
    <property type="match status" value="1"/>
</dbReference>
<dbReference type="InterPro" id="IPR003965">
    <property type="entry name" value="Fatty_acid_synthase"/>
</dbReference>
<dbReference type="InterPro" id="IPR029069">
    <property type="entry name" value="HotDog_dom_sf"/>
</dbReference>
<dbReference type="InterPro" id="IPR002539">
    <property type="entry name" value="MaoC-like_dom"/>
</dbReference>
<dbReference type="InterPro" id="IPR050965">
    <property type="entry name" value="UPF0336/Enoyl-CoA_hydratase"/>
</dbReference>
<dbReference type="PANTHER" id="PTHR43437:SF3">
    <property type="entry name" value="HYDROXYACYL-THIOESTER DEHYDRATASE TYPE 2, MITOCHONDRIAL"/>
    <property type="match status" value="1"/>
</dbReference>
<dbReference type="PANTHER" id="PTHR43437">
    <property type="entry name" value="HYDROXYACYL-THIOESTER DEHYDRATASE TYPE 2, MITOCHONDRIAL-RELATED"/>
    <property type="match status" value="1"/>
</dbReference>
<dbReference type="Pfam" id="PF01575">
    <property type="entry name" value="MaoC_dehydratas"/>
    <property type="match status" value="1"/>
</dbReference>
<dbReference type="PRINTS" id="PR01483">
    <property type="entry name" value="FASYNTHASE"/>
</dbReference>
<dbReference type="SUPFAM" id="SSF54637">
    <property type="entry name" value="Thioesterase/thiol ester dehydrase-isomerase"/>
    <property type="match status" value="1"/>
</dbReference>
<reference key="1">
    <citation type="journal article" date="1997" name="J. Bacteriol.">
        <title>Cloning and analysis of the poly(3-hydroxybutyrate-co-3-hydroxyhexanoate) biosynthesis genes of Aeromonas caviae.</title>
        <authorList>
            <person name="Fukui T."/>
            <person name="Doi Y."/>
        </authorList>
    </citation>
    <scope>NUCLEOTIDE SEQUENCE [GENOMIC DNA]</scope>
    <scope>FUNCTION</scope>
    <source>
        <strain>FA440</strain>
    </source>
</reference>
<reference key="2">
    <citation type="journal article" date="1998" name="J. Bacteriol.">
        <title>Expression and characterization of (R)-specific enoyl coenzyme A hydratase involved in polyhydroxyalkanoate biosynthesis by Aeromonas caviae.</title>
        <authorList>
            <person name="Fukui T."/>
            <person name="Shiomi N."/>
            <person name="Doi Y."/>
        </authorList>
    </citation>
    <scope>PROTEIN SEQUENCE OF 2-21</scope>
    <scope>FUNCTION</scope>
    <scope>CATALYTIC ACTIVITY</scope>
    <scope>SUBUNIT</scope>
    <scope>MASS SPECTROMETRY</scope>
    <scope>BIOPHYSICOCHEMICAL PROPERTIES</scope>
    <source>
        <strain>FA440</strain>
    </source>
</reference>
<reference key="3">
    <citation type="journal article" date="2003" name="J. Biol. Chem.">
        <title>Crystal structure of the (R)-specific enoyl-CoA hydratase from Aeromonas caviae involved in polyhydroxyalkanoate biosynthesis.</title>
        <authorList>
            <person name="Hisano T."/>
            <person name="Tsuge T."/>
            <person name="Fukui T."/>
            <person name="Iwata T."/>
            <person name="Miki K."/>
            <person name="Doi Y."/>
        </authorList>
    </citation>
    <scope>X-RAY CRYSTALLOGRAPHY (1.50 ANGSTROMS)</scope>
    <scope>MUTAGENESIS OF ASP-32; HIS-37 AND SER-63</scope>
</reference>
<comment type="function">
    <text evidence="3 4">Catalyzes the hydration of trans-2-enoyl-CoA with a chain-length of 4-6 carbon atoms, forming the corresponding (3R)-3-hydroxyacyl-CoA.</text>
</comment>
<comment type="catalytic activity">
    <reaction evidence="4">
        <text>a (3R)-3-hydroxyacyl-CoA = a (2E)-enoyl-CoA + H2O</text>
        <dbReference type="Rhea" id="RHEA:26526"/>
        <dbReference type="ChEBI" id="CHEBI:15377"/>
        <dbReference type="ChEBI" id="CHEBI:57319"/>
        <dbReference type="ChEBI" id="CHEBI:58856"/>
        <dbReference type="EC" id="4.2.1.119"/>
    </reaction>
</comment>
<comment type="biophysicochemical properties">
    <kinetics>
        <KM evidence="4">29 uM for crotonyl-CoA</KM>
        <KM evidence="4">36 uM for 2-pentenoyl-CoA</KM>
        <KM evidence="4">34 uM for 2-hexenoyl-CoA</KM>
        <KM evidence="4">50 uM for 2-octenoyl-CoA</KM>
        <Vmax evidence="4">6200.0 umol/min/mg enzyme with crotonyl-CoA as substrate</Vmax>
        <Vmax evidence="4">2800.0 umol/min/mg enzyme with 2-pentenoyl-CoA as substrate</Vmax>
        <Vmax evidence="4">1800.0 umol/min/mg enzyme with 2-hexenoyl-CoA as substrate</Vmax>
        <Vmax evidence="4">2.5 umol/min/mg enzyme with 2-octenoyl-CoA as substrate</Vmax>
    </kinetics>
</comment>
<comment type="subunit">
    <text evidence="4">Homodimer.</text>
</comment>
<comment type="mass spectrometry" mass="13963.0" method="MALDI" evidence="4"/>
<protein>
    <recommendedName>
        <fullName>(R)-specific enoyl-CoA hydratase</fullName>
        <ecNumber evidence="4">4.2.1.119</ecNumber>
    </recommendedName>
</protein>
<feature type="initiator methionine" description="Removed" evidence="4">
    <location>
        <position position="1"/>
    </location>
</feature>
<feature type="chain" id="PRO_0000413682" description="(R)-specific enoyl-CoA hydratase">
    <location>
        <begin position="2"/>
        <end position="134"/>
    </location>
</feature>
<feature type="domain" description="MaoC-like">
    <location>
        <begin position="5"/>
        <end position="119"/>
    </location>
</feature>
<feature type="binding site" evidence="1">
    <location>
        <begin position="32"/>
        <end position="37"/>
    </location>
    <ligand>
        <name>a (3R)-3-hydroxyacyl-CoA</name>
        <dbReference type="ChEBI" id="CHEBI:57319"/>
    </ligand>
</feature>
<feature type="binding site" evidence="1">
    <location>
        <position position="55"/>
    </location>
    <ligand>
        <name>a (3R)-3-hydroxyacyl-CoA</name>
        <dbReference type="ChEBI" id="CHEBI:57319"/>
    </ligand>
</feature>
<feature type="binding site" evidence="1">
    <location>
        <position position="84"/>
    </location>
    <ligand>
        <name>a (3R)-3-hydroxyacyl-CoA</name>
        <dbReference type="ChEBI" id="CHEBI:57319"/>
    </ligand>
</feature>
<feature type="mutagenesis site" description="Almost no activity." evidence="2">
    <original>D</original>
    <variation>A</variation>
    <location>
        <position position="32"/>
    </location>
</feature>
<feature type="mutagenesis site" description="Almost no activity." evidence="2">
    <original>H</original>
    <variation>A</variation>
    <variation>N</variation>
    <location>
        <position position="37"/>
    </location>
</feature>
<feature type="mutagenesis site" description="100-fold lower Vmax." evidence="2">
    <original>S</original>
    <variation>A</variation>
    <location>
        <position position="63"/>
    </location>
</feature>
<feature type="strand" evidence="5">
    <location>
        <begin position="11"/>
        <end position="17"/>
    </location>
</feature>
<feature type="helix" evidence="5">
    <location>
        <begin position="20"/>
        <end position="30"/>
    </location>
</feature>
<feature type="helix" evidence="5">
    <location>
        <begin position="35"/>
        <end position="38"/>
    </location>
</feature>
<feature type="helix" evidence="5">
    <location>
        <begin position="40"/>
        <end position="43"/>
    </location>
</feature>
<feature type="helix" evidence="5">
    <location>
        <begin position="55"/>
        <end position="68"/>
    </location>
</feature>
<feature type="strand" evidence="5">
    <location>
        <begin position="76"/>
        <end position="84"/>
    </location>
</feature>
<feature type="strand" evidence="5">
    <location>
        <begin position="93"/>
        <end position="103"/>
    </location>
</feature>
<feature type="strand" evidence="5">
    <location>
        <begin position="105"/>
        <end position="117"/>
    </location>
</feature>
<feature type="strand" evidence="5">
    <location>
        <begin position="123"/>
        <end position="132"/>
    </location>
</feature>
<evidence type="ECO:0000250" key="1"/>
<evidence type="ECO:0000269" key="2">
    <source>
    </source>
</evidence>
<evidence type="ECO:0000269" key="3">
    <source>
    </source>
</evidence>
<evidence type="ECO:0000269" key="4">
    <source>
    </source>
</evidence>
<evidence type="ECO:0007829" key="5">
    <source>
        <dbReference type="PDB" id="1IQ6"/>
    </source>
</evidence>